<gene>
    <name evidence="1" type="primary">lipM</name>
    <name type="ordered locus">CD630_07330</name>
</gene>
<feature type="chain" id="PRO_0000410855" description="Octanoyltransferase LipM">
    <location>
        <begin position="1"/>
        <end position="271"/>
    </location>
</feature>
<feature type="domain" description="BPL/LPL catalytic" evidence="2">
    <location>
        <begin position="31"/>
        <end position="242"/>
    </location>
</feature>
<feature type="active site" description="Acyl-thioester intermediate" evidence="1">
    <location>
        <position position="144"/>
    </location>
</feature>
<feature type="site" description="Lowers pKa of active site Cys" evidence="1">
    <location>
        <position position="159"/>
    </location>
</feature>
<organism>
    <name type="scientific">Clostridioides difficile (strain 630)</name>
    <name type="common">Peptoclostridium difficile</name>
    <dbReference type="NCBI Taxonomy" id="272563"/>
    <lineage>
        <taxon>Bacteria</taxon>
        <taxon>Bacillati</taxon>
        <taxon>Bacillota</taxon>
        <taxon>Clostridia</taxon>
        <taxon>Peptostreptococcales</taxon>
        <taxon>Peptostreptococcaceae</taxon>
        <taxon>Clostridioides</taxon>
    </lineage>
</organism>
<accession>Q189T1</accession>
<evidence type="ECO:0000255" key="1">
    <source>
        <dbReference type="HAMAP-Rule" id="MF_02118"/>
    </source>
</evidence>
<evidence type="ECO:0000255" key="2">
    <source>
        <dbReference type="PROSITE-ProRule" id="PRU01067"/>
    </source>
</evidence>
<protein>
    <recommendedName>
        <fullName evidence="1">Octanoyltransferase LipM</fullName>
        <ecNumber evidence="1">2.3.1.181</ecNumber>
    </recommendedName>
    <alternativeName>
        <fullName evidence="1">Octanoyl-[acyl-carrier-protein]:[GcvH] N-octanoyltransferase</fullName>
    </alternativeName>
</protein>
<comment type="function">
    <text evidence="1">Catalyzes the transfer of endogenously produced octanoic acid from octanoyl-acyl-carrier-protein onto the lipoyl domain of GcvH, an intermediate carrier during protein lipoylation.</text>
</comment>
<comment type="catalytic activity">
    <reaction evidence="1">
        <text>octanoyl-[ACP] + L-lysyl-[protein] = N(6)-octanoyl-L-lysyl-[protein] + holo-[ACP] + H(+)</text>
        <dbReference type="Rhea" id="RHEA:17665"/>
        <dbReference type="Rhea" id="RHEA-COMP:9636"/>
        <dbReference type="Rhea" id="RHEA-COMP:9685"/>
        <dbReference type="Rhea" id="RHEA-COMP:9752"/>
        <dbReference type="Rhea" id="RHEA-COMP:9928"/>
        <dbReference type="ChEBI" id="CHEBI:15378"/>
        <dbReference type="ChEBI" id="CHEBI:29969"/>
        <dbReference type="ChEBI" id="CHEBI:64479"/>
        <dbReference type="ChEBI" id="CHEBI:78463"/>
        <dbReference type="ChEBI" id="CHEBI:78809"/>
        <dbReference type="EC" id="2.3.1.181"/>
    </reaction>
</comment>
<comment type="pathway">
    <text evidence="1">Protein modification; protein lipoylation via endogenous pathway; protein N(6)-(lipoyl)lysine from octanoyl-[acyl-carrier-protein].</text>
</comment>
<comment type="subunit">
    <text evidence="1">Monomer.</text>
</comment>
<comment type="miscellaneous">
    <text evidence="1">In the reaction, the free carboxyl group of octanoic acid is attached via an amide linkage to the epsilon-amino group of a specific lysine residue of lipoyl domains of lipoate-dependent enzymes. The reaction proceeds via an octanoyl-thioester enzyme intermediate.</text>
</comment>
<comment type="similarity">
    <text evidence="1">Belongs to the octanoyltransferase LipM family.</text>
</comment>
<keyword id="KW-0012">Acyltransferase</keyword>
<keyword id="KW-1185">Reference proteome</keyword>
<keyword id="KW-0808">Transferase</keyword>
<dbReference type="EC" id="2.3.1.181" evidence="1"/>
<dbReference type="EMBL" id="AM180355">
    <property type="protein sequence ID" value="CAJ67567.1"/>
    <property type="molecule type" value="Genomic_DNA"/>
</dbReference>
<dbReference type="RefSeq" id="WP_003436933.1">
    <property type="nucleotide sequence ID" value="NZ_JAUPES010000005.1"/>
</dbReference>
<dbReference type="RefSeq" id="YP_001087210.1">
    <property type="nucleotide sequence ID" value="NC_009089.1"/>
</dbReference>
<dbReference type="SMR" id="Q189T1"/>
<dbReference type="STRING" id="272563.CD630_07330"/>
<dbReference type="DNASU" id="4914197"/>
<dbReference type="EnsemblBacteria" id="CAJ67567">
    <property type="protein sequence ID" value="CAJ67567"/>
    <property type="gene ID" value="CD630_07330"/>
</dbReference>
<dbReference type="KEGG" id="cdf:CD630_07330"/>
<dbReference type="KEGG" id="pdc:CDIF630_00849"/>
<dbReference type="PATRIC" id="fig|272563.120.peg.754"/>
<dbReference type="eggNOG" id="COG0095">
    <property type="taxonomic scope" value="Bacteria"/>
</dbReference>
<dbReference type="OrthoDB" id="9788148at2"/>
<dbReference type="PhylomeDB" id="Q189T1"/>
<dbReference type="BioCyc" id="PDIF272563:G12WB-844-MONOMER"/>
<dbReference type="Proteomes" id="UP000001978">
    <property type="component" value="Chromosome"/>
</dbReference>
<dbReference type="GO" id="GO:0033819">
    <property type="term" value="F:lipoyl(octanoyl) transferase activity"/>
    <property type="evidence" value="ECO:0007669"/>
    <property type="project" value="UniProtKB-UniRule"/>
</dbReference>
<dbReference type="GO" id="GO:0009107">
    <property type="term" value="P:lipoate biosynthetic process"/>
    <property type="evidence" value="ECO:0007669"/>
    <property type="project" value="UniProtKB-UniRule"/>
</dbReference>
<dbReference type="GO" id="GO:0036211">
    <property type="term" value="P:protein modification process"/>
    <property type="evidence" value="ECO:0007669"/>
    <property type="project" value="InterPro"/>
</dbReference>
<dbReference type="CDD" id="cd16443">
    <property type="entry name" value="LplA"/>
    <property type="match status" value="1"/>
</dbReference>
<dbReference type="Gene3D" id="3.30.930.10">
    <property type="entry name" value="Bira Bifunctional Protein, Domain 2"/>
    <property type="match status" value="1"/>
</dbReference>
<dbReference type="HAMAP" id="MF_02118">
    <property type="entry name" value="LipM"/>
    <property type="match status" value="1"/>
</dbReference>
<dbReference type="InterPro" id="IPR045864">
    <property type="entry name" value="aa-tRNA-synth_II/BPL/LPL"/>
</dbReference>
<dbReference type="InterPro" id="IPR004143">
    <property type="entry name" value="BPL_LPL_catalytic"/>
</dbReference>
<dbReference type="InterPro" id="IPR024898">
    <property type="entry name" value="LipM"/>
</dbReference>
<dbReference type="InterPro" id="IPR050664">
    <property type="entry name" value="Octanoyltrans_LipM/LipL"/>
</dbReference>
<dbReference type="PANTHER" id="PTHR43679:SF2">
    <property type="entry name" value="OCTANOYL-[GCVH]:PROTEIN N-OCTANOYLTRANSFERASE"/>
    <property type="match status" value="1"/>
</dbReference>
<dbReference type="PANTHER" id="PTHR43679">
    <property type="entry name" value="OCTANOYLTRANSFERASE LIPM-RELATED"/>
    <property type="match status" value="1"/>
</dbReference>
<dbReference type="Pfam" id="PF21948">
    <property type="entry name" value="LplA-B_cat"/>
    <property type="match status" value="1"/>
</dbReference>
<dbReference type="SUPFAM" id="SSF55681">
    <property type="entry name" value="Class II aaRS and biotin synthetases"/>
    <property type="match status" value="1"/>
</dbReference>
<dbReference type="PROSITE" id="PS51733">
    <property type="entry name" value="BPL_LPL_CATALYTIC"/>
    <property type="match status" value="1"/>
</dbReference>
<sequence>MNQWRVIHNKSYEGAMNMAIDEAIFTAYKKGHNKPTLRFYTWEPACLSIGYFQKLEDEIDLDKCRCMNIDYTRRITGGRAVLHDNELTYSIIIGEDNPLIDKSINLSYRYISEGLVKGLNLSGIETDNLNRGERISRENLSAACFNAHASYEVTINNKKVIGSAQSRKDGVLLQHGSIILDFDVEKLFKLIKTKTPELKERAMKFTAKKASGIENEIGRKIDIDILQKNIVKGLAEQFNVEFVEGDLTDYEKQLVKELYEKYKNEEYNKKR</sequence>
<name>LIPM_CLOD6</name>
<reference key="1">
    <citation type="journal article" date="2006" name="Nat. Genet.">
        <title>The multidrug-resistant human pathogen Clostridium difficile has a highly mobile, mosaic genome.</title>
        <authorList>
            <person name="Sebaihia M."/>
            <person name="Wren B.W."/>
            <person name="Mullany P."/>
            <person name="Fairweather N.F."/>
            <person name="Minton N."/>
            <person name="Stabler R."/>
            <person name="Thomson N.R."/>
            <person name="Roberts A.P."/>
            <person name="Cerdeno-Tarraga A.M."/>
            <person name="Wang H."/>
            <person name="Holden M.T.G."/>
            <person name="Wright A."/>
            <person name="Churcher C."/>
            <person name="Quail M.A."/>
            <person name="Baker S."/>
            <person name="Bason N."/>
            <person name="Brooks K."/>
            <person name="Chillingworth T."/>
            <person name="Cronin A."/>
            <person name="Davis P."/>
            <person name="Dowd L."/>
            <person name="Fraser A."/>
            <person name="Feltwell T."/>
            <person name="Hance Z."/>
            <person name="Holroyd S."/>
            <person name="Jagels K."/>
            <person name="Moule S."/>
            <person name="Mungall K."/>
            <person name="Price C."/>
            <person name="Rabbinowitsch E."/>
            <person name="Sharp S."/>
            <person name="Simmonds M."/>
            <person name="Stevens K."/>
            <person name="Unwin L."/>
            <person name="Whithead S."/>
            <person name="Dupuy B."/>
            <person name="Dougan G."/>
            <person name="Barrell B."/>
            <person name="Parkhill J."/>
        </authorList>
    </citation>
    <scope>NUCLEOTIDE SEQUENCE [LARGE SCALE GENOMIC DNA]</scope>
    <source>
        <strain>630</strain>
    </source>
</reference>
<proteinExistence type="inferred from homology"/>